<reference key="1">
    <citation type="journal article" date="1998" name="Nature">
        <title>The genome sequence of Rickettsia prowazekii and the origin of mitochondria.</title>
        <authorList>
            <person name="Andersson S.G.E."/>
            <person name="Zomorodipour A."/>
            <person name="Andersson J.O."/>
            <person name="Sicheritz-Ponten T."/>
            <person name="Alsmark U.C.M."/>
            <person name="Podowski R.M."/>
            <person name="Naeslund A.K."/>
            <person name="Eriksson A.-S."/>
            <person name="Winkler H.H."/>
            <person name="Kurland C.G."/>
        </authorList>
    </citation>
    <scope>NUCLEOTIDE SEQUENCE [LARGE SCALE GENOMIC DNA]</scope>
    <source>
        <strain>Madrid E</strain>
    </source>
</reference>
<sequence>MQHAPDLVHSKDLTFVLRLDNEDILRKLFYLEAKRNNFSVEINEEWTLKINFPSKILELYKLLINNFYLKNFAKEELQKELYKELFPNCQIPFEQLIEEVSFFENFIECLKEFYIKKSLAQSIMFLLVSKYIEEHDVAKSLFKSESFKKVSELEKFKPYYDINKCDEVDNYVFNCILNDVKGPYIKNLSSSILDLVNHCQPDCEIVSIEILGNSAVLV</sequence>
<accession>Q9ZDG6</accession>
<feature type="chain" id="PRO_0000101355" description="Uncharacterized protein RP363">
    <location>
        <begin position="1"/>
        <end position="218"/>
    </location>
</feature>
<protein>
    <recommendedName>
        <fullName>Uncharacterized protein RP363</fullName>
    </recommendedName>
</protein>
<name>Y363_RICPR</name>
<organism>
    <name type="scientific">Rickettsia prowazekii (strain Madrid E)</name>
    <dbReference type="NCBI Taxonomy" id="272947"/>
    <lineage>
        <taxon>Bacteria</taxon>
        <taxon>Pseudomonadati</taxon>
        <taxon>Pseudomonadota</taxon>
        <taxon>Alphaproteobacteria</taxon>
        <taxon>Rickettsiales</taxon>
        <taxon>Rickettsiaceae</taxon>
        <taxon>Rickettsieae</taxon>
        <taxon>Rickettsia</taxon>
        <taxon>typhus group</taxon>
    </lineage>
</organism>
<keyword id="KW-1185">Reference proteome</keyword>
<dbReference type="EMBL" id="AJ235271">
    <property type="protein sequence ID" value="CAA14822.1"/>
    <property type="molecule type" value="Genomic_DNA"/>
</dbReference>
<dbReference type="PIR" id="D71693">
    <property type="entry name" value="D71693"/>
</dbReference>
<dbReference type="RefSeq" id="NP_220746.1">
    <property type="nucleotide sequence ID" value="NC_000963.1"/>
</dbReference>
<dbReference type="RefSeq" id="WP_010886276.1">
    <property type="nucleotide sequence ID" value="NC_000963.1"/>
</dbReference>
<dbReference type="STRING" id="272947.gene:17555443"/>
<dbReference type="EnsemblBacteria" id="CAA14822">
    <property type="protein sequence ID" value="CAA14822"/>
    <property type="gene ID" value="CAA14822"/>
</dbReference>
<dbReference type="KEGG" id="rpr:RP363"/>
<dbReference type="PATRIC" id="fig|272947.5.peg.372"/>
<dbReference type="HOGENOM" id="CLU_070575_0_0_5"/>
<dbReference type="OrthoDB" id="7161135at2"/>
<dbReference type="Proteomes" id="UP000002480">
    <property type="component" value="Chromosome"/>
</dbReference>
<dbReference type="InterPro" id="IPR020168">
    <property type="entry name" value="Uncharacterised_RP363/RP364"/>
</dbReference>
<dbReference type="Pfam" id="PF17422">
    <property type="entry name" value="DUF5410"/>
    <property type="match status" value="2"/>
</dbReference>
<proteinExistence type="predicted"/>
<gene>
    <name type="ordered locus">RP363</name>
</gene>